<keyword id="KW-0479">Metal-binding</keyword>
<keyword id="KW-1185">Reference proteome</keyword>
<keyword id="KW-0687">Ribonucleoprotein</keyword>
<keyword id="KW-0689">Ribosomal protein</keyword>
<keyword id="KW-0694">RNA-binding</keyword>
<keyword id="KW-0699">rRNA-binding</keyword>
<keyword id="KW-0862">Zinc</keyword>
<proteinExistence type="inferred from homology"/>
<sequence length="61" mass="7043">MAKKSMIAKAQRKPKFQVRAYTRCRICGRPHSVYRDFGLCRVCLRKMGSEGLIPGLRKASW</sequence>
<organism>
    <name type="scientific">Helicobacter pylori (strain ATCC 700392 / 26695)</name>
    <name type="common">Campylobacter pylori</name>
    <dbReference type="NCBI Taxonomy" id="85962"/>
    <lineage>
        <taxon>Bacteria</taxon>
        <taxon>Pseudomonadati</taxon>
        <taxon>Campylobacterota</taxon>
        <taxon>Epsilonproteobacteria</taxon>
        <taxon>Campylobacterales</taxon>
        <taxon>Helicobacteraceae</taxon>
        <taxon>Helicobacter</taxon>
    </lineage>
</organism>
<reference key="1">
    <citation type="journal article" date="1997" name="Nature">
        <title>The complete genome sequence of the gastric pathogen Helicobacter pylori.</title>
        <authorList>
            <person name="Tomb J.-F."/>
            <person name="White O."/>
            <person name="Kerlavage A.R."/>
            <person name="Clayton R.A."/>
            <person name="Sutton G.G."/>
            <person name="Fleischmann R.D."/>
            <person name="Ketchum K.A."/>
            <person name="Klenk H.-P."/>
            <person name="Gill S.R."/>
            <person name="Dougherty B.A."/>
            <person name="Nelson K.E."/>
            <person name="Quackenbush J."/>
            <person name="Zhou L."/>
            <person name="Kirkness E.F."/>
            <person name="Peterson S.N."/>
            <person name="Loftus B.J."/>
            <person name="Richardson D.L."/>
            <person name="Dodson R.J."/>
            <person name="Khalak H.G."/>
            <person name="Glodek A."/>
            <person name="McKenney K."/>
            <person name="FitzGerald L.M."/>
            <person name="Lee N."/>
            <person name="Adams M.D."/>
            <person name="Hickey E.K."/>
            <person name="Berg D.E."/>
            <person name="Gocayne J.D."/>
            <person name="Utterback T.R."/>
            <person name="Peterson J.D."/>
            <person name="Kelley J.M."/>
            <person name="Cotton M.D."/>
            <person name="Weidman J.F."/>
            <person name="Fujii C."/>
            <person name="Bowman C."/>
            <person name="Watthey L."/>
            <person name="Wallin E."/>
            <person name="Hayes W.S."/>
            <person name="Borodovsky M."/>
            <person name="Karp P.D."/>
            <person name="Smith H.O."/>
            <person name="Fraser C.M."/>
            <person name="Venter J.C."/>
        </authorList>
    </citation>
    <scope>NUCLEOTIDE SEQUENCE [LARGE SCALE GENOMIC DNA]</scope>
    <source>
        <strain>ATCC 700392 / 26695</strain>
    </source>
</reference>
<name>RS14Z_HELPY</name>
<protein>
    <recommendedName>
        <fullName evidence="1">Small ribosomal subunit protein uS14</fullName>
    </recommendedName>
    <alternativeName>
        <fullName evidence="2">30S ribosomal protein S14 type Z</fullName>
    </alternativeName>
</protein>
<accession>P56021</accession>
<dbReference type="EMBL" id="AE000511">
    <property type="protein sequence ID" value="AAD08361.1"/>
    <property type="molecule type" value="Genomic_DNA"/>
</dbReference>
<dbReference type="PIR" id="B64683">
    <property type="entry name" value="B64683"/>
</dbReference>
<dbReference type="RefSeq" id="NP_208098.1">
    <property type="nucleotide sequence ID" value="NC_000915.1"/>
</dbReference>
<dbReference type="RefSeq" id="WP_001085694.1">
    <property type="nucleotide sequence ID" value="NC_018939.1"/>
</dbReference>
<dbReference type="SMR" id="P56021"/>
<dbReference type="STRING" id="85962.HP_1306"/>
<dbReference type="PaxDb" id="85962-C694_06745"/>
<dbReference type="EnsemblBacteria" id="AAD08361">
    <property type="protein sequence ID" value="AAD08361"/>
    <property type="gene ID" value="HP_1306"/>
</dbReference>
<dbReference type="KEGG" id="heo:C694_06745"/>
<dbReference type="KEGG" id="hpy:HP_1306"/>
<dbReference type="PATRIC" id="fig|85962.47.peg.1400"/>
<dbReference type="eggNOG" id="COG0199">
    <property type="taxonomic scope" value="Bacteria"/>
</dbReference>
<dbReference type="InParanoid" id="P56021"/>
<dbReference type="OrthoDB" id="9810484at2"/>
<dbReference type="PhylomeDB" id="P56021"/>
<dbReference type="Proteomes" id="UP000000429">
    <property type="component" value="Chromosome"/>
</dbReference>
<dbReference type="GO" id="GO:0005737">
    <property type="term" value="C:cytoplasm"/>
    <property type="evidence" value="ECO:0007669"/>
    <property type="project" value="UniProtKB-ARBA"/>
</dbReference>
<dbReference type="GO" id="GO:0015935">
    <property type="term" value="C:small ribosomal subunit"/>
    <property type="evidence" value="ECO:0000318"/>
    <property type="project" value="GO_Central"/>
</dbReference>
<dbReference type="GO" id="GO:0019843">
    <property type="term" value="F:rRNA binding"/>
    <property type="evidence" value="ECO:0007669"/>
    <property type="project" value="UniProtKB-UniRule"/>
</dbReference>
<dbReference type="GO" id="GO:0003735">
    <property type="term" value="F:structural constituent of ribosome"/>
    <property type="evidence" value="ECO:0000318"/>
    <property type="project" value="GO_Central"/>
</dbReference>
<dbReference type="GO" id="GO:0008270">
    <property type="term" value="F:zinc ion binding"/>
    <property type="evidence" value="ECO:0007669"/>
    <property type="project" value="UniProtKB-UniRule"/>
</dbReference>
<dbReference type="GO" id="GO:0006412">
    <property type="term" value="P:translation"/>
    <property type="evidence" value="ECO:0000318"/>
    <property type="project" value="GO_Central"/>
</dbReference>
<dbReference type="FunFam" id="4.10.830.10:FF:000001">
    <property type="entry name" value="30S ribosomal protein S14 type Z"/>
    <property type="match status" value="1"/>
</dbReference>
<dbReference type="Gene3D" id="4.10.830.10">
    <property type="entry name" value="30s Ribosomal Protein S14, Chain N"/>
    <property type="match status" value="1"/>
</dbReference>
<dbReference type="HAMAP" id="MF_01364_B">
    <property type="entry name" value="Ribosomal_uS14_2_B"/>
    <property type="match status" value="1"/>
</dbReference>
<dbReference type="InterPro" id="IPR001209">
    <property type="entry name" value="Ribosomal_uS14"/>
</dbReference>
<dbReference type="InterPro" id="IPR023053">
    <property type="entry name" value="Ribosomal_uS14_bact"/>
</dbReference>
<dbReference type="InterPro" id="IPR018271">
    <property type="entry name" value="Ribosomal_uS14_CS"/>
</dbReference>
<dbReference type="InterPro" id="IPR043140">
    <property type="entry name" value="Ribosomal_uS14_sf"/>
</dbReference>
<dbReference type="NCBIfam" id="NF005974">
    <property type="entry name" value="PRK08061.1"/>
    <property type="match status" value="1"/>
</dbReference>
<dbReference type="PANTHER" id="PTHR19836">
    <property type="entry name" value="30S RIBOSOMAL PROTEIN S14"/>
    <property type="match status" value="1"/>
</dbReference>
<dbReference type="PANTHER" id="PTHR19836:SF19">
    <property type="entry name" value="SMALL RIBOSOMAL SUBUNIT PROTEIN US14M"/>
    <property type="match status" value="1"/>
</dbReference>
<dbReference type="Pfam" id="PF00253">
    <property type="entry name" value="Ribosomal_S14"/>
    <property type="match status" value="1"/>
</dbReference>
<dbReference type="SUPFAM" id="SSF57716">
    <property type="entry name" value="Glucocorticoid receptor-like (DNA-binding domain)"/>
    <property type="match status" value="1"/>
</dbReference>
<dbReference type="PROSITE" id="PS00527">
    <property type="entry name" value="RIBOSOMAL_S14"/>
    <property type="match status" value="1"/>
</dbReference>
<comment type="function">
    <text evidence="1">Binds 16S rRNA, required for the assembly of 30S particles and may also be responsible for determining the conformation of the 16S rRNA at the A site.</text>
</comment>
<comment type="cofactor">
    <cofactor evidence="1">
        <name>Zn(2+)</name>
        <dbReference type="ChEBI" id="CHEBI:29105"/>
    </cofactor>
    <text evidence="1">Binds 1 zinc ion per subunit.</text>
</comment>
<comment type="subunit">
    <text evidence="1">Part of the 30S ribosomal subunit. Contacts proteins S3 and S10.</text>
</comment>
<comment type="similarity">
    <text evidence="1">Belongs to the universal ribosomal protein uS14 family. Zinc-binding uS14 subfamily.</text>
</comment>
<feature type="chain" id="PRO_0000130894" description="Small ribosomal subunit protein uS14">
    <location>
        <begin position="1"/>
        <end position="61"/>
    </location>
</feature>
<feature type="binding site" evidence="1">
    <location>
        <position position="24"/>
    </location>
    <ligand>
        <name>Zn(2+)</name>
        <dbReference type="ChEBI" id="CHEBI:29105"/>
    </ligand>
</feature>
<feature type="binding site" evidence="1">
    <location>
        <position position="27"/>
    </location>
    <ligand>
        <name>Zn(2+)</name>
        <dbReference type="ChEBI" id="CHEBI:29105"/>
    </ligand>
</feature>
<feature type="binding site" evidence="1">
    <location>
        <position position="40"/>
    </location>
    <ligand>
        <name>Zn(2+)</name>
        <dbReference type="ChEBI" id="CHEBI:29105"/>
    </ligand>
</feature>
<feature type="binding site" evidence="1">
    <location>
        <position position="43"/>
    </location>
    <ligand>
        <name>Zn(2+)</name>
        <dbReference type="ChEBI" id="CHEBI:29105"/>
    </ligand>
</feature>
<evidence type="ECO:0000255" key="1">
    <source>
        <dbReference type="HAMAP-Rule" id="MF_01364"/>
    </source>
</evidence>
<evidence type="ECO:0000305" key="2"/>
<gene>
    <name evidence="1" type="primary">rpsZ</name>
    <name evidence="1" type="synonym">rpsN</name>
    <name type="ordered locus">HP_1306</name>
</gene>